<name>TM2D2_XENTR</name>
<proteinExistence type="evidence at transcript level"/>
<gene>
    <name type="primary">tm2d2</name>
    <name type="ORF">TEgg137n19.1</name>
</gene>
<comment type="subcellular location">
    <subcellularLocation>
        <location evidence="3">Membrane</location>
        <topology evidence="3">Multi-pass membrane protein</topology>
    </subcellularLocation>
</comment>
<comment type="similarity">
    <text evidence="3">Belongs to the TM2 family.</text>
</comment>
<dbReference type="EMBL" id="CR761327">
    <property type="protein sequence ID" value="CAJ81332.1"/>
    <property type="molecule type" value="mRNA"/>
</dbReference>
<dbReference type="EMBL" id="BC088075">
    <property type="protein sequence ID" value="AAH88075.1"/>
    <property type="molecule type" value="mRNA"/>
</dbReference>
<dbReference type="RefSeq" id="NP_001011324.1">
    <property type="nucleotide sequence ID" value="NM_001011324.2"/>
</dbReference>
<dbReference type="FunCoup" id="Q5M8E3">
    <property type="interactions" value="1313"/>
</dbReference>
<dbReference type="STRING" id="8364.ENSXETP00000051937"/>
<dbReference type="GlyCosmos" id="Q5M8E3">
    <property type="glycosylation" value="3 sites, No reported glycans"/>
</dbReference>
<dbReference type="PaxDb" id="8364-ENSXETP00000033191"/>
<dbReference type="DNASU" id="496785"/>
<dbReference type="GeneID" id="496785"/>
<dbReference type="KEGG" id="xtr:496785"/>
<dbReference type="AGR" id="Xenbase:XB-GENE-964283"/>
<dbReference type="CTD" id="83877"/>
<dbReference type="Xenbase" id="XB-GENE-964283">
    <property type="gene designation" value="tm2d2"/>
</dbReference>
<dbReference type="eggNOG" id="KOG4272">
    <property type="taxonomic scope" value="Eukaryota"/>
</dbReference>
<dbReference type="HOGENOM" id="CLU_084872_3_0_1"/>
<dbReference type="InParanoid" id="Q5M8E3"/>
<dbReference type="OMA" id="PIDHKGN"/>
<dbReference type="OrthoDB" id="408511at2759"/>
<dbReference type="PhylomeDB" id="Q5M8E3"/>
<dbReference type="TreeFam" id="TF314896"/>
<dbReference type="Proteomes" id="UP000008143">
    <property type="component" value="Chromosome 3"/>
</dbReference>
<dbReference type="Bgee" id="ENSXETG00000015155">
    <property type="expression patterns" value="Expressed in egg cell and 13 other cell types or tissues"/>
</dbReference>
<dbReference type="ExpressionAtlas" id="Q5M8E3">
    <property type="expression patterns" value="differential"/>
</dbReference>
<dbReference type="GO" id="GO:0016020">
    <property type="term" value="C:membrane"/>
    <property type="evidence" value="ECO:0007669"/>
    <property type="project" value="UniProtKB-SubCell"/>
</dbReference>
<dbReference type="InterPro" id="IPR007829">
    <property type="entry name" value="TM2"/>
</dbReference>
<dbReference type="InterPro" id="IPR050932">
    <property type="entry name" value="TM2D1-3-like"/>
</dbReference>
<dbReference type="PANTHER" id="PTHR21016">
    <property type="entry name" value="BETA-AMYLOID BINDING PROTEIN-RELATED"/>
    <property type="match status" value="1"/>
</dbReference>
<dbReference type="PANTHER" id="PTHR21016:SF4">
    <property type="entry name" value="TM2 DOMAIN-CONTAINING PROTEIN 2"/>
    <property type="match status" value="1"/>
</dbReference>
<dbReference type="Pfam" id="PF05154">
    <property type="entry name" value="TM2"/>
    <property type="match status" value="1"/>
</dbReference>
<sequence length="198" mass="21752">MRWPVPPVGYLLLGGQGLLLTFSLISSQNQTSPVTYPDLNLSAAPEPRDPLGPLVLCSYLPEEFVECDDPVDHMGNGTAQQELRYGCKKFGGQAYGDVEHTQVMCRALDGIECDGPRSFLRGNKPCIKYTGHYFITTLLYSFFLGCFGVDRFCLGHTGTAVGKLLTLGGLGIWWFVDLILLITGGLMPSDNSNWCTIY</sequence>
<accession>Q5M8E3</accession>
<organism>
    <name type="scientific">Xenopus tropicalis</name>
    <name type="common">Western clawed frog</name>
    <name type="synonym">Silurana tropicalis</name>
    <dbReference type="NCBI Taxonomy" id="8364"/>
    <lineage>
        <taxon>Eukaryota</taxon>
        <taxon>Metazoa</taxon>
        <taxon>Chordata</taxon>
        <taxon>Craniata</taxon>
        <taxon>Vertebrata</taxon>
        <taxon>Euteleostomi</taxon>
        <taxon>Amphibia</taxon>
        <taxon>Batrachia</taxon>
        <taxon>Anura</taxon>
        <taxon>Pipoidea</taxon>
        <taxon>Pipidae</taxon>
        <taxon>Xenopodinae</taxon>
        <taxon>Xenopus</taxon>
        <taxon>Silurana</taxon>
    </lineage>
</organism>
<evidence type="ECO:0000255" key="1"/>
<evidence type="ECO:0000255" key="2">
    <source>
        <dbReference type="PROSITE-ProRule" id="PRU00498"/>
    </source>
</evidence>
<evidence type="ECO:0000305" key="3"/>
<protein>
    <recommendedName>
        <fullName>TM2 domain-containing protein 2</fullName>
    </recommendedName>
</protein>
<feature type="signal peptide" evidence="1">
    <location>
        <begin position="1"/>
        <end position="27"/>
    </location>
</feature>
<feature type="chain" id="PRO_0000298988" description="TM2 domain-containing protein 2">
    <location>
        <begin position="28"/>
        <end position="198"/>
    </location>
</feature>
<feature type="topological domain" description="Extracellular" evidence="3">
    <location>
        <begin position="28"/>
        <end position="128"/>
    </location>
</feature>
<feature type="transmembrane region" description="Helical" evidence="1">
    <location>
        <begin position="129"/>
        <end position="149"/>
    </location>
</feature>
<feature type="topological domain" description="Cytoplasmic" evidence="3">
    <location>
        <begin position="150"/>
        <end position="166"/>
    </location>
</feature>
<feature type="transmembrane region" description="Helical" evidence="1">
    <location>
        <begin position="167"/>
        <end position="187"/>
    </location>
</feature>
<feature type="topological domain" description="Extracellular" evidence="3">
    <location>
        <begin position="188"/>
        <end position="198"/>
    </location>
</feature>
<feature type="domain" description="TM2" evidence="1">
    <location>
        <begin position="131"/>
        <end position="179"/>
    </location>
</feature>
<feature type="glycosylation site" description="N-linked (GlcNAc...) asparagine" evidence="2">
    <location>
        <position position="29"/>
    </location>
</feature>
<feature type="glycosylation site" description="N-linked (GlcNAc...) asparagine" evidence="2">
    <location>
        <position position="40"/>
    </location>
</feature>
<feature type="glycosylation site" description="N-linked (GlcNAc...) asparagine" evidence="2">
    <location>
        <position position="76"/>
    </location>
</feature>
<reference key="1">
    <citation type="submission" date="2006-10" db="EMBL/GenBank/DDBJ databases">
        <authorList>
            <consortium name="Sanger Xenopus tropicalis EST/cDNA project"/>
        </authorList>
    </citation>
    <scope>NUCLEOTIDE SEQUENCE [LARGE SCALE MRNA]</scope>
    <source>
        <tissue>Egg</tissue>
    </source>
</reference>
<reference key="2">
    <citation type="submission" date="2004-12" db="EMBL/GenBank/DDBJ databases">
        <authorList>
            <consortium name="NIH - Xenopus Gene Collection (XGC) project"/>
        </authorList>
    </citation>
    <scope>NUCLEOTIDE SEQUENCE [LARGE SCALE MRNA]</scope>
</reference>
<keyword id="KW-0325">Glycoprotein</keyword>
<keyword id="KW-0472">Membrane</keyword>
<keyword id="KW-1185">Reference proteome</keyword>
<keyword id="KW-0732">Signal</keyword>
<keyword id="KW-0812">Transmembrane</keyword>
<keyword id="KW-1133">Transmembrane helix</keyword>